<dbReference type="EC" id="1.8.4.11" evidence="1"/>
<dbReference type="EMBL" id="CU459141">
    <property type="protein sequence ID" value="CAM88116.1"/>
    <property type="molecule type" value="Genomic_DNA"/>
</dbReference>
<dbReference type="RefSeq" id="WP_001183413.1">
    <property type="nucleotide sequence ID" value="NZ_JBDGFB010000003.1"/>
</dbReference>
<dbReference type="SMR" id="B0V4P7"/>
<dbReference type="EnsemblBacteria" id="CAM88116">
    <property type="protein sequence ID" value="CAM88116"/>
    <property type="gene ID" value="ABAYE3317"/>
</dbReference>
<dbReference type="GeneID" id="92892449"/>
<dbReference type="KEGG" id="aby:ABAYE3317"/>
<dbReference type="HOGENOM" id="CLU_031040_10_0_6"/>
<dbReference type="GO" id="GO:0033744">
    <property type="term" value="F:L-methionine:thioredoxin-disulfide S-oxidoreductase activity"/>
    <property type="evidence" value="ECO:0007669"/>
    <property type="project" value="RHEA"/>
</dbReference>
<dbReference type="GO" id="GO:0008113">
    <property type="term" value="F:peptide-methionine (S)-S-oxide reductase activity"/>
    <property type="evidence" value="ECO:0007669"/>
    <property type="project" value="UniProtKB-UniRule"/>
</dbReference>
<dbReference type="GO" id="GO:0036211">
    <property type="term" value="P:protein modification process"/>
    <property type="evidence" value="ECO:0007669"/>
    <property type="project" value="UniProtKB-UniRule"/>
</dbReference>
<dbReference type="Gene3D" id="3.30.1060.10">
    <property type="entry name" value="Peptide methionine sulphoxide reductase MsrA"/>
    <property type="match status" value="1"/>
</dbReference>
<dbReference type="HAMAP" id="MF_01401">
    <property type="entry name" value="MsrA"/>
    <property type="match status" value="1"/>
</dbReference>
<dbReference type="InterPro" id="IPR002569">
    <property type="entry name" value="Met_Sox_Rdtase_MsrA_dom"/>
</dbReference>
<dbReference type="InterPro" id="IPR036509">
    <property type="entry name" value="Met_Sox_Rdtase_MsrA_sf"/>
</dbReference>
<dbReference type="NCBIfam" id="TIGR00401">
    <property type="entry name" value="msrA"/>
    <property type="match status" value="1"/>
</dbReference>
<dbReference type="PANTHER" id="PTHR43774">
    <property type="entry name" value="PEPTIDE METHIONINE SULFOXIDE REDUCTASE"/>
    <property type="match status" value="1"/>
</dbReference>
<dbReference type="PANTHER" id="PTHR43774:SF1">
    <property type="entry name" value="PEPTIDE METHIONINE SULFOXIDE REDUCTASE MSRA 2"/>
    <property type="match status" value="1"/>
</dbReference>
<dbReference type="Pfam" id="PF01625">
    <property type="entry name" value="PMSR"/>
    <property type="match status" value="1"/>
</dbReference>
<dbReference type="SUPFAM" id="SSF55068">
    <property type="entry name" value="Peptide methionine sulfoxide reductase"/>
    <property type="match status" value="1"/>
</dbReference>
<reference key="1">
    <citation type="journal article" date="2008" name="PLoS ONE">
        <title>Comparative analysis of Acinetobacters: three genomes for three lifestyles.</title>
        <authorList>
            <person name="Vallenet D."/>
            <person name="Nordmann P."/>
            <person name="Barbe V."/>
            <person name="Poirel L."/>
            <person name="Mangenot S."/>
            <person name="Bataille E."/>
            <person name="Dossat C."/>
            <person name="Gas S."/>
            <person name="Kreimeyer A."/>
            <person name="Lenoble P."/>
            <person name="Oztas S."/>
            <person name="Poulain J."/>
            <person name="Segurens B."/>
            <person name="Robert C."/>
            <person name="Abergel C."/>
            <person name="Claverie J.-M."/>
            <person name="Raoult D."/>
            <person name="Medigue C."/>
            <person name="Weissenbach J."/>
            <person name="Cruveiller S."/>
        </authorList>
    </citation>
    <scope>NUCLEOTIDE SEQUENCE [LARGE SCALE GENOMIC DNA]</scope>
    <source>
        <strain>AYE</strain>
    </source>
</reference>
<comment type="function">
    <text evidence="1">Has an important function as a repair enzyme for proteins that have been inactivated by oxidation. Catalyzes the reversible oxidation-reduction of methionine sulfoxide in proteins to methionine.</text>
</comment>
<comment type="catalytic activity">
    <reaction evidence="1">
        <text>L-methionyl-[protein] + [thioredoxin]-disulfide + H2O = L-methionyl-(S)-S-oxide-[protein] + [thioredoxin]-dithiol</text>
        <dbReference type="Rhea" id="RHEA:14217"/>
        <dbReference type="Rhea" id="RHEA-COMP:10698"/>
        <dbReference type="Rhea" id="RHEA-COMP:10700"/>
        <dbReference type="Rhea" id="RHEA-COMP:12313"/>
        <dbReference type="Rhea" id="RHEA-COMP:12315"/>
        <dbReference type="ChEBI" id="CHEBI:15377"/>
        <dbReference type="ChEBI" id="CHEBI:16044"/>
        <dbReference type="ChEBI" id="CHEBI:29950"/>
        <dbReference type="ChEBI" id="CHEBI:44120"/>
        <dbReference type="ChEBI" id="CHEBI:50058"/>
        <dbReference type="EC" id="1.8.4.11"/>
    </reaction>
</comment>
<comment type="catalytic activity">
    <reaction evidence="1">
        <text>[thioredoxin]-disulfide + L-methionine + H2O = L-methionine (S)-S-oxide + [thioredoxin]-dithiol</text>
        <dbReference type="Rhea" id="RHEA:19993"/>
        <dbReference type="Rhea" id="RHEA-COMP:10698"/>
        <dbReference type="Rhea" id="RHEA-COMP:10700"/>
        <dbReference type="ChEBI" id="CHEBI:15377"/>
        <dbReference type="ChEBI" id="CHEBI:29950"/>
        <dbReference type="ChEBI" id="CHEBI:50058"/>
        <dbReference type="ChEBI" id="CHEBI:57844"/>
        <dbReference type="ChEBI" id="CHEBI:58772"/>
        <dbReference type="EC" id="1.8.4.11"/>
    </reaction>
</comment>
<comment type="similarity">
    <text evidence="1">Belongs to the MsrA Met sulfoxide reductase family.</text>
</comment>
<feature type="chain" id="PRO_1000145393" description="Peptide methionine sulfoxide reductase MsrA">
    <location>
        <begin position="1"/>
        <end position="173"/>
    </location>
</feature>
<feature type="active site" evidence="1">
    <location>
        <position position="10"/>
    </location>
</feature>
<protein>
    <recommendedName>
        <fullName evidence="1">Peptide methionine sulfoxide reductase MsrA</fullName>
        <shortName evidence="1">Protein-methionine-S-oxide reductase</shortName>
        <ecNumber evidence="1">1.8.4.11</ecNumber>
    </recommendedName>
    <alternativeName>
        <fullName evidence="1">Peptide-methionine (S)-S-oxide reductase</fullName>
        <shortName evidence="1">Peptide Met(O) reductase</shortName>
    </alternativeName>
</protein>
<gene>
    <name evidence="1" type="primary">msrA</name>
    <name type="ordered locus">ABAYE3317</name>
</gene>
<organism>
    <name type="scientific">Acinetobacter baumannii (strain AYE)</name>
    <dbReference type="NCBI Taxonomy" id="509173"/>
    <lineage>
        <taxon>Bacteria</taxon>
        <taxon>Pseudomonadati</taxon>
        <taxon>Pseudomonadota</taxon>
        <taxon>Gammaproteobacteria</taxon>
        <taxon>Moraxellales</taxon>
        <taxon>Moraxellaceae</taxon>
        <taxon>Acinetobacter</taxon>
        <taxon>Acinetobacter calcoaceticus/baumannii complex</taxon>
    </lineage>
</organism>
<proteinExistence type="inferred from homology"/>
<sequence length="173" mass="19807">MQQALFGGGCFWCVEAVFLQIRGVEKVTSGYAGGHTTHPTYEQVCQGDTQHAEVVLIDFDEQQVTYSQLLDVFFATHDPTTLNRQGNDIGTQYRSVIYYFNEEQKQAAEHTIQTLKDDDLDIVTELSPAPTFYPAEDYHQNYYEKNPSQGYCNFAIPPKLLKLHSKFQHLMKN</sequence>
<evidence type="ECO:0000255" key="1">
    <source>
        <dbReference type="HAMAP-Rule" id="MF_01401"/>
    </source>
</evidence>
<accession>B0V4P7</accession>
<name>MSRA_ACIBY</name>
<keyword id="KW-0560">Oxidoreductase</keyword>